<proteinExistence type="evidence at transcript level"/>
<protein>
    <recommendedName>
        <fullName>Tetraspanin-7</fullName>
        <shortName>Tspan-7</shortName>
    </recommendedName>
    <alternativeName>
        <fullName>Transmembrane 4 superfamily member 2</fullName>
    </alternativeName>
    <cdAntigenName>CD231</cdAntigenName>
</protein>
<sequence length="244" mass="26945">METKPVITCLKTLLIIYSFVFWITGVILLAVGVWGKLTLGTYISLIAENSTNAPYVLIGTGTTIVVFGLFGCFATCRGSPWMLKLYAMFLSLVFLAELVAGISGFVFRHEIKDTFLRTYTDAMQTYDGKDDRSQAVDHVQRSLSCCGVQNYTNWSTSPYFLEHGIPPSCCMNETDCNPQDLHNLTVAATKVNQKGCYDLVTSFMETNMGIIAGVAFGIAFSQLIGMLLACCLSRFITANQYEMV</sequence>
<comment type="function">
    <text>May be involved in cell proliferation and cell motility.</text>
</comment>
<comment type="subcellular location">
    <subcellularLocation>
        <location>Membrane</location>
        <topology>Multi-pass membrane protein</topology>
    </subcellularLocation>
</comment>
<comment type="similarity">
    <text evidence="2">Belongs to the tetraspanin (TM4SF) family.</text>
</comment>
<feature type="chain" id="PRO_0000219251" description="Tetraspanin-7">
    <location>
        <begin position="1"/>
        <end position="244"/>
    </location>
</feature>
<feature type="topological domain" description="Cytoplasmic" evidence="1">
    <location>
        <begin position="1"/>
        <end position="11"/>
    </location>
</feature>
<feature type="transmembrane region" description="Helical" evidence="1">
    <location>
        <begin position="12"/>
        <end position="35"/>
    </location>
</feature>
<feature type="topological domain" description="Extracellular" evidence="1">
    <location>
        <begin position="36"/>
        <end position="51"/>
    </location>
</feature>
<feature type="transmembrane region" description="Helical" evidence="1">
    <location>
        <begin position="52"/>
        <end position="70"/>
    </location>
</feature>
<feature type="topological domain" description="Cytoplasmic" evidence="1">
    <location>
        <begin position="71"/>
        <end position="81"/>
    </location>
</feature>
<feature type="transmembrane region" description="Helical" evidence="1">
    <location>
        <begin position="82"/>
        <end position="107"/>
    </location>
</feature>
<feature type="topological domain" description="Extracellular" evidence="1">
    <location>
        <begin position="108"/>
        <end position="208"/>
    </location>
</feature>
<feature type="transmembrane region" description="Helical" evidence="1">
    <location>
        <begin position="209"/>
        <end position="229"/>
    </location>
</feature>
<feature type="topological domain" description="Cytoplasmic" evidence="1">
    <location>
        <begin position="230"/>
        <end position="244"/>
    </location>
</feature>
<feature type="glycosylation site" description="N-linked (GlcNAc...) asparagine" evidence="1">
    <location>
        <position position="49"/>
    </location>
</feature>
<feature type="glycosylation site" description="N-linked (GlcNAc...) asparagine" evidence="1">
    <location>
        <position position="150"/>
    </location>
</feature>
<feature type="glycosylation site" description="N-linked (GlcNAc...) asparagine" evidence="1">
    <location>
        <position position="153"/>
    </location>
</feature>
<feature type="glycosylation site" description="N-linked (GlcNAc...) asparagine" evidence="1">
    <location>
        <position position="172"/>
    </location>
</feature>
<feature type="glycosylation site" description="N-linked (GlcNAc...) asparagine" evidence="1">
    <location>
        <position position="183"/>
    </location>
</feature>
<accession>Q7YQK9</accession>
<keyword id="KW-0325">Glycoprotein</keyword>
<keyword id="KW-0472">Membrane</keyword>
<keyword id="KW-0812">Transmembrane</keyword>
<keyword id="KW-1133">Transmembrane helix</keyword>
<dbReference type="EMBL" id="AB102667">
    <property type="protein sequence ID" value="BAC81136.1"/>
    <property type="molecule type" value="mRNA"/>
</dbReference>
<dbReference type="SMR" id="Q7YQK9"/>
<dbReference type="GlyCosmos" id="Q7YQK9">
    <property type="glycosylation" value="5 sites, No reported glycans"/>
</dbReference>
<dbReference type="GO" id="GO:0005886">
    <property type="term" value="C:plasma membrane"/>
    <property type="evidence" value="ECO:0007669"/>
    <property type="project" value="TreeGrafter"/>
</dbReference>
<dbReference type="CDD" id="cd03161">
    <property type="entry name" value="TM4SF2_6_like_LEL"/>
    <property type="match status" value="1"/>
</dbReference>
<dbReference type="FunFam" id="1.10.1450.10:FF:000003">
    <property type="entry name" value="Tetraspanin"/>
    <property type="match status" value="1"/>
</dbReference>
<dbReference type="Gene3D" id="1.10.1450.10">
    <property type="entry name" value="Tetraspanin"/>
    <property type="match status" value="1"/>
</dbReference>
<dbReference type="InterPro" id="IPR018499">
    <property type="entry name" value="Tetraspanin/Peripherin"/>
</dbReference>
<dbReference type="InterPro" id="IPR000301">
    <property type="entry name" value="Tetraspanin_animals"/>
</dbReference>
<dbReference type="InterPro" id="IPR018503">
    <property type="entry name" value="Tetraspanin_CS"/>
</dbReference>
<dbReference type="InterPro" id="IPR008952">
    <property type="entry name" value="Tetraspanin_EC2_sf"/>
</dbReference>
<dbReference type="InterPro" id="IPR048232">
    <property type="entry name" value="TSN6/7_LEL"/>
</dbReference>
<dbReference type="PANTHER" id="PTHR19282">
    <property type="entry name" value="TETRASPANIN"/>
    <property type="match status" value="1"/>
</dbReference>
<dbReference type="PANTHER" id="PTHR19282:SF257">
    <property type="entry name" value="TETRASPANIN-7"/>
    <property type="match status" value="1"/>
</dbReference>
<dbReference type="Pfam" id="PF00335">
    <property type="entry name" value="Tetraspanin"/>
    <property type="match status" value="1"/>
</dbReference>
<dbReference type="PIRSF" id="PIRSF002419">
    <property type="entry name" value="Tetraspanin"/>
    <property type="match status" value="1"/>
</dbReference>
<dbReference type="PRINTS" id="PR00259">
    <property type="entry name" value="TMFOUR"/>
</dbReference>
<dbReference type="SUPFAM" id="SSF48652">
    <property type="entry name" value="Tetraspanin"/>
    <property type="match status" value="1"/>
</dbReference>
<dbReference type="PROSITE" id="PS00421">
    <property type="entry name" value="TM4_1"/>
    <property type="match status" value="1"/>
</dbReference>
<name>TSN7_PONPY</name>
<organism>
    <name type="scientific">Pongo pygmaeus</name>
    <name type="common">Bornean orangutan</name>
    <dbReference type="NCBI Taxonomy" id="9600"/>
    <lineage>
        <taxon>Eukaryota</taxon>
        <taxon>Metazoa</taxon>
        <taxon>Chordata</taxon>
        <taxon>Craniata</taxon>
        <taxon>Vertebrata</taxon>
        <taxon>Euteleostomi</taxon>
        <taxon>Mammalia</taxon>
        <taxon>Eutheria</taxon>
        <taxon>Euarchontoglires</taxon>
        <taxon>Primates</taxon>
        <taxon>Haplorrhini</taxon>
        <taxon>Catarrhini</taxon>
        <taxon>Hominidae</taxon>
        <taxon>Pongo</taxon>
    </lineage>
</organism>
<evidence type="ECO:0000255" key="1"/>
<evidence type="ECO:0000305" key="2"/>
<reference key="1">
    <citation type="journal article" date="2003" name="Mol. Biol. Evol.">
        <title>Gene diversity patterns at 10 X-chromosomal loci in humans and chimpanzees.</title>
        <authorList>
            <person name="Kitano T."/>
            <person name="Schwarz C."/>
            <person name="Nickel B."/>
            <person name="Paeaebo S."/>
        </authorList>
    </citation>
    <scope>NUCLEOTIDE SEQUENCE [MRNA]</scope>
</reference>
<gene>
    <name type="primary">TSPAN7</name>
    <name type="synonym">TM4SF2</name>
</gene>